<sequence>MGCVSSKSTTVLSPQTSFNEASRTSFRALPGPSQRQLEVYDQCLIGAARWPDDSSKSNTPENRAYCQSMYNSIRSAGDEISRGGITSFEELWGRATEWRLSKLQRGEPLYSAFASERTSDTDAVTPLVKPYKSVLARVVDHEDAHDEIMQDNLFGDLNVKVYRQTAYLHGNVIPLNTFRVATDTEYLRDRVAHLRTELGAKALKQHLQRYNPDRIDHTNASYLPIIKDHLNDLYRQAISSDLSQAELISLIARTHWWAASAMPDQRGSAAKAEFAARAIASAHGIELPPFRNGNVSDIEAMLSGEEEFVEKYRSLLDSDCF</sequence>
<keyword id="KW-0002">3D-structure</keyword>
<keyword id="KW-0964">Secreted</keyword>
<keyword id="KW-0843">Virulence</keyword>
<dbReference type="EMBL" id="M21965">
    <property type="protein sequence ID" value="AAA25726.1"/>
    <property type="molecule type" value="Genomic_DNA"/>
</dbReference>
<dbReference type="PIR" id="A43649">
    <property type="entry name" value="A43649"/>
</dbReference>
<dbReference type="RefSeq" id="WP_122390765.1">
    <property type="nucleotide sequence ID" value="NZ_RBNZ01000352.1"/>
</dbReference>
<dbReference type="PDB" id="1NH1">
    <property type="method" value="X-ray"/>
    <property type="resolution" value="2.20 A"/>
    <property type="chains" value="A=1-321"/>
</dbReference>
<dbReference type="PDB" id="2NUD">
    <property type="method" value="X-ray"/>
    <property type="resolution" value="2.30 A"/>
    <property type="chains" value="A/B=1-321"/>
</dbReference>
<dbReference type="PDB" id="2NUN">
    <property type="method" value="X-ray"/>
    <property type="resolution" value="2.40 A"/>
    <property type="chains" value="A=1-321"/>
</dbReference>
<dbReference type="PDB" id="8TWJ">
    <property type="method" value="X-ray"/>
    <property type="resolution" value="1.90 A"/>
    <property type="chains" value="A=1-321"/>
</dbReference>
<dbReference type="PDB" id="8TWO">
    <property type="method" value="X-ray"/>
    <property type="resolution" value="2.09 A"/>
    <property type="chains" value="A=1-321"/>
</dbReference>
<dbReference type="PDB" id="8TWS">
    <property type="method" value="X-ray"/>
    <property type="resolution" value="2.85 A"/>
    <property type="chains" value="A=1-321"/>
</dbReference>
<dbReference type="PDB" id="8TXF">
    <property type="method" value="X-ray"/>
    <property type="resolution" value="1.29 A"/>
    <property type="chains" value="A=1-321"/>
</dbReference>
<dbReference type="PDBsum" id="1NH1"/>
<dbReference type="PDBsum" id="2NUD"/>
<dbReference type="PDBsum" id="2NUN"/>
<dbReference type="PDBsum" id="8TWJ"/>
<dbReference type="PDBsum" id="8TWO"/>
<dbReference type="PDBsum" id="8TWS"/>
<dbReference type="PDBsum" id="8TXF"/>
<dbReference type="SMR" id="P13835"/>
<dbReference type="DIP" id="DIP-61324N"/>
<dbReference type="IntAct" id="P13835">
    <property type="interactions" value="2"/>
</dbReference>
<dbReference type="EvolutionaryTrace" id="P13835"/>
<dbReference type="PHI-base" id="PHI:3492"/>
<dbReference type="PHI-base" id="PHI:964"/>
<dbReference type="GO" id="GO:0005576">
    <property type="term" value="C:extracellular region"/>
    <property type="evidence" value="ECO:0007669"/>
    <property type="project" value="UniProtKB-SubCell"/>
</dbReference>
<dbReference type="Gene3D" id="1.10.3290.20">
    <property type="match status" value="2"/>
</dbReference>
<dbReference type="InterPro" id="IPR008798">
    <property type="entry name" value="Avirulence_B/C"/>
</dbReference>
<dbReference type="InterPro" id="IPR036231">
    <property type="entry name" value="Avirulence_B/C_sf"/>
</dbReference>
<dbReference type="InterPro" id="IPR053495">
    <property type="entry name" value="AvrB/C-like"/>
</dbReference>
<dbReference type="NCBIfam" id="NF041403">
    <property type="entry name" value="XopAH"/>
    <property type="match status" value="1"/>
</dbReference>
<dbReference type="Pfam" id="PF05394">
    <property type="entry name" value="AvrB_AvrC"/>
    <property type="match status" value="1"/>
</dbReference>
<dbReference type="SUPFAM" id="SSF103383">
    <property type="entry name" value="Antivirulence factor"/>
    <property type="match status" value="1"/>
</dbReference>
<gene>
    <name type="primary">avrB</name>
</gene>
<protein>
    <recommendedName>
        <fullName>Avirulence protein B</fullName>
    </recommendedName>
</protein>
<comment type="subcellular location">
    <subcellularLocation>
        <location evidence="1">Secreted</location>
    </subcellularLocation>
    <text evidence="2">Probably secreted via a type III secretion system (T3SS).</text>
</comment>
<comment type="similarity">
    <text evidence="3">To avirulence C protein of the same strain.</text>
</comment>
<evidence type="ECO:0000269" key="1">
    <source>
    </source>
</evidence>
<evidence type="ECO:0000303" key="2">
    <source>
    </source>
</evidence>
<evidence type="ECO:0000303" key="3">
    <source>
    </source>
</evidence>
<evidence type="ECO:0007829" key="4">
    <source>
        <dbReference type="PDB" id="1NH1"/>
    </source>
</evidence>
<evidence type="ECO:0007829" key="5">
    <source>
        <dbReference type="PDB" id="2NUN"/>
    </source>
</evidence>
<name>AVRB_PSESG</name>
<organism>
    <name type="scientific">Pseudomonas savastanoi pv. glycinea</name>
    <name type="common">Pseudomonas syringae pv. glycinea</name>
    <dbReference type="NCBI Taxonomy" id="318"/>
    <lineage>
        <taxon>Bacteria</taxon>
        <taxon>Pseudomonadati</taxon>
        <taxon>Pseudomonadota</taxon>
        <taxon>Gammaproteobacteria</taxon>
        <taxon>Pseudomonadales</taxon>
        <taxon>Pseudomonadaceae</taxon>
        <taxon>Pseudomonas</taxon>
    </lineage>
</organism>
<feature type="chain" id="PRO_0000064771" description="Avirulence protein B">
    <location>
        <begin position="1"/>
        <end position="321"/>
    </location>
</feature>
<feature type="strand" evidence="5">
    <location>
        <begin position="17"/>
        <end position="19"/>
    </location>
</feature>
<feature type="turn" evidence="5">
    <location>
        <begin position="20"/>
        <end position="23"/>
    </location>
</feature>
<feature type="strand" evidence="5">
    <location>
        <begin position="24"/>
        <end position="26"/>
    </location>
</feature>
<feature type="helix" evidence="4">
    <location>
        <begin position="39"/>
        <end position="42"/>
    </location>
</feature>
<feature type="turn" evidence="4">
    <location>
        <begin position="43"/>
        <end position="46"/>
    </location>
</feature>
<feature type="helix" evidence="4">
    <location>
        <begin position="60"/>
        <end position="81"/>
    </location>
</feature>
<feature type="helix" evidence="4">
    <location>
        <begin position="88"/>
        <end position="101"/>
    </location>
</feature>
<feature type="helix" evidence="4">
    <location>
        <begin position="110"/>
        <end position="113"/>
    </location>
</feature>
<feature type="strand" evidence="4">
    <location>
        <begin position="124"/>
        <end position="126"/>
    </location>
</feature>
<feature type="helix" evidence="4">
    <location>
        <begin position="133"/>
        <end position="139"/>
    </location>
</feature>
<feature type="strand" evidence="4">
    <location>
        <begin position="145"/>
        <end position="149"/>
    </location>
</feature>
<feature type="turn" evidence="4">
    <location>
        <begin position="152"/>
        <end position="154"/>
    </location>
</feature>
<feature type="strand" evidence="4">
    <location>
        <begin position="156"/>
        <end position="168"/>
    </location>
</feature>
<feature type="strand" evidence="4">
    <location>
        <begin position="171"/>
        <end position="181"/>
    </location>
</feature>
<feature type="helix" evidence="4">
    <location>
        <begin position="184"/>
        <end position="198"/>
    </location>
</feature>
<feature type="helix" evidence="4">
    <location>
        <begin position="200"/>
        <end position="210"/>
    </location>
</feature>
<feature type="strand" evidence="4">
    <location>
        <begin position="212"/>
        <end position="216"/>
    </location>
</feature>
<feature type="helix" evidence="4">
    <location>
        <begin position="220"/>
        <end position="222"/>
    </location>
</feature>
<feature type="helix" evidence="4">
    <location>
        <begin position="223"/>
        <end position="237"/>
    </location>
</feature>
<feature type="helix" evidence="4">
    <location>
        <begin position="244"/>
        <end position="261"/>
    </location>
</feature>
<feature type="strand" evidence="4">
    <location>
        <begin position="264"/>
        <end position="266"/>
    </location>
</feature>
<feature type="helix" evidence="4">
    <location>
        <begin position="268"/>
        <end position="282"/>
    </location>
</feature>
<feature type="helix" evidence="4">
    <location>
        <begin position="296"/>
        <end position="301"/>
    </location>
</feature>
<feature type="helix" evidence="4">
    <location>
        <begin position="305"/>
        <end position="311"/>
    </location>
</feature>
<feature type="helix" evidence="4">
    <location>
        <begin position="313"/>
        <end position="315"/>
    </location>
</feature>
<accession>P13835</accession>
<proteinExistence type="evidence at protein level"/>
<reference key="1">
    <citation type="journal article" date="1988" name="J. Bacteriol.">
        <title>Characterization and expression of two avirulence genes cloned from Pseudomonas syringae pv. glycinea.</title>
        <authorList>
            <person name="Tamaki S."/>
            <person name="Dahlbeck D."/>
            <person name="Staskawicz B."/>
            <person name="Keen N.T."/>
        </authorList>
    </citation>
    <scope>NUCLEOTIDE SEQUENCE [GENOMIC DNA]</scope>
    <source>
        <strain>Race 0</strain>
    </source>
</reference>
<reference key="2">
    <citation type="journal article" date="1999" name="Proc. Natl. Acad. Sci. U.S.A.">
        <title>The Xanthomonas Hrp type III system secretes proteins from plant and mammalian bacterial pathogens.</title>
        <authorList>
            <person name="Rossier O."/>
            <person name="Wengelnik K."/>
            <person name="Hahn K."/>
            <person name="Bonas U."/>
        </authorList>
    </citation>
    <scope>SUBCELLULAR LOCATION</scope>
</reference>